<name>DC121_MOUSE</name>
<evidence type="ECO:0000256" key="1">
    <source>
        <dbReference type="SAM" id="MobiDB-lite"/>
    </source>
</evidence>
<evidence type="ECO:0000305" key="2"/>
<organism>
    <name type="scientific">Mus musculus</name>
    <name type="common">Mouse</name>
    <dbReference type="NCBI Taxonomy" id="10090"/>
    <lineage>
        <taxon>Eukaryota</taxon>
        <taxon>Metazoa</taxon>
        <taxon>Chordata</taxon>
        <taxon>Craniata</taxon>
        <taxon>Vertebrata</taxon>
        <taxon>Euteleostomi</taxon>
        <taxon>Mammalia</taxon>
        <taxon>Eutheria</taxon>
        <taxon>Euarchontoglires</taxon>
        <taxon>Glires</taxon>
        <taxon>Rodentia</taxon>
        <taxon>Myomorpha</taxon>
        <taxon>Muroidea</taxon>
        <taxon>Muridae</taxon>
        <taxon>Murinae</taxon>
        <taxon>Mus</taxon>
        <taxon>Mus</taxon>
    </lineage>
</organism>
<protein>
    <recommendedName>
        <fullName>DDB1- and CUL4-associated factor 12-like protein 1</fullName>
    </recommendedName>
    <alternativeName>
        <fullName>WD repeat-containing protein 40B</fullName>
    </alternativeName>
</protein>
<sequence length="501" mass="54366">MRQADSQTQPSPAEQETPQPAGPSNRSPPTMGPQQTGSRKRKAAEVDQGAGTSSSPGPAAPMATAGEGNAEGSMLLTKRPRRPVAHLSMVNYLKGRALGADGHPGLAGFEGDLRSYGVLRLPELLRERQLTLGPLNKVFASQWLNARQVVCGTKCNTLFVVDVKTDHIMRIPLMRDRVPDLSRGPPSCGIHAVELNPSKTLLATGGENPNSLAVYQLPTLDPVCLGDCQGHRDWIFAIAWMSDTVAVSGSRDGTVALWKVDPDMFNGSIAWHKDAGLPVYAHISPTDMEAIPKATTNPGNRKVRALAFSNKNQELGAVSLDGYFHLWKARSSLSRLLSLRLPYCRENVCLTYCDEFSLYAVGSQSHVSFLDLRQGQQNIPPLCSREGGTGVRSLSVHQHIVTVGTGHGSLLFYDIRAQKFLEERSAANPDMFPVPSGRKLKLTCGSGWINQDDLLENYVAGVEDFPNALYTHCYNWPEMKLFVGGGPLASGLHGNYAGLWS</sequence>
<comment type="similarity">
    <text evidence="2">Belongs to the WD repeat DCAF12 family.</text>
</comment>
<comment type="caution">
    <text evidence="2">It is uncertain whether Met-1 or Met-31 is the initiator.</text>
</comment>
<comment type="sequence caution" evidence="2">
    <conflict type="frameshift">
        <sequence resource="EMBL-CDS" id="BAC28681"/>
    </conflict>
</comment>
<accession>Q8CBW4</accession>
<accession>Q6NV47</accession>
<accession>Q8C8E2</accession>
<accession>Q8CA30</accession>
<accession>Q8CAL3</accession>
<accession>Q8CBX8</accession>
<proteinExistence type="evidence at transcript level"/>
<feature type="chain" id="PRO_0000306849" description="DDB1- and CUL4-associated factor 12-like protein 1">
    <location>
        <begin position="1"/>
        <end position="501"/>
    </location>
</feature>
<feature type="repeat" description="WD 1">
    <location>
        <begin position="185"/>
        <end position="225"/>
    </location>
</feature>
<feature type="repeat" description="WD 2">
    <location>
        <begin position="230"/>
        <end position="268"/>
    </location>
</feature>
<feature type="repeat" description="WD 3">
    <location>
        <begin position="298"/>
        <end position="337"/>
    </location>
</feature>
<feature type="repeat" description="WD 4">
    <location>
        <begin position="384"/>
        <end position="423"/>
    </location>
</feature>
<feature type="region of interest" description="Disordered" evidence="1">
    <location>
        <begin position="1"/>
        <end position="67"/>
    </location>
</feature>
<feature type="compositionally biased region" description="Polar residues" evidence="1">
    <location>
        <begin position="1"/>
        <end position="37"/>
    </location>
</feature>
<feature type="sequence conflict" description="In Ref. 1; BAC30445." evidence="2" ref="1">
    <original>Q</original>
    <variation>R</variation>
    <location>
        <position position="9"/>
    </location>
</feature>
<feature type="sequence conflict" description="In Ref. 3; AAH68319." evidence="2" ref="3">
    <original>T</original>
    <variation>S</variation>
    <location>
        <position position="17"/>
    </location>
</feature>
<feature type="sequence conflict" description="In Ref. 1; BAC30041." evidence="2" ref="1">
    <original>L</original>
    <variation>V</variation>
    <location>
        <position position="75"/>
    </location>
</feature>
<feature type="sequence conflict" description="In Ref. 3; AAH68319." evidence="2" ref="3">
    <original>M</original>
    <variation>T</variation>
    <location>
        <position position="89"/>
    </location>
</feature>
<feature type="sequence conflict" description="In Ref. 1; BAC28681." evidence="2" ref="1">
    <original>S</original>
    <variation>H</variation>
    <location>
        <position position="115"/>
    </location>
</feature>
<feature type="sequence conflict" description="In Ref. 1; BAC33034." evidence="2" ref="1">
    <original>L</original>
    <variation>V</variation>
    <location>
        <position position="173"/>
    </location>
</feature>
<gene>
    <name type="primary">Dcaf12l1</name>
    <name type="synonym">Wdr40b</name>
</gene>
<reference key="1">
    <citation type="journal article" date="2005" name="Science">
        <title>The transcriptional landscape of the mammalian genome.</title>
        <authorList>
            <person name="Carninci P."/>
            <person name="Kasukawa T."/>
            <person name="Katayama S."/>
            <person name="Gough J."/>
            <person name="Frith M.C."/>
            <person name="Maeda N."/>
            <person name="Oyama R."/>
            <person name="Ravasi T."/>
            <person name="Lenhard B."/>
            <person name="Wells C."/>
            <person name="Kodzius R."/>
            <person name="Shimokawa K."/>
            <person name="Bajic V.B."/>
            <person name="Brenner S.E."/>
            <person name="Batalov S."/>
            <person name="Forrest A.R."/>
            <person name="Zavolan M."/>
            <person name="Davis M.J."/>
            <person name="Wilming L.G."/>
            <person name="Aidinis V."/>
            <person name="Allen J.E."/>
            <person name="Ambesi-Impiombato A."/>
            <person name="Apweiler R."/>
            <person name="Aturaliya R.N."/>
            <person name="Bailey T.L."/>
            <person name="Bansal M."/>
            <person name="Baxter L."/>
            <person name="Beisel K.W."/>
            <person name="Bersano T."/>
            <person name="Bono H."/>
            <person name="Chalk A.M."/>
            <person name="Chiu K.P."/>
            <person name="Choudhary V."/>
            <person name="Christoffels A."/>
            <person name="Clutterbuck D.R."/>
            <person name="Crowe M.L."/>
            <person name="Dalla E."/>
            <person name="Dalrymple B.P."/>
            <person name="de Bono B."/>
            <person name="Della Gatta G."/>
            <person name="di Bernardo D."/>
            <person name="Down T."/>
            <person name="Engstrom P."/>
            <person name="Fagiolini M."/>
            <person name="Faulkner G."/>
            <person name="Fletcher C.F."/>
            <person name="Fukushima T."/>
            <person name="Furuno M."/>
            <person name="Futaki S."/>
            <person name="Gariboldi M."/>
            <person name="Georgii-Hemming P."/>
            <person name="Gingeras T.R."/>
            <person name="Gojobori T."/>
            <person name="Green R.E."/>
            <person name="Gustincich S."/>
            <person name="Harbers M."/>
            <person name="Hayashi Y."/>
            <person name="Hensch T.K."/>
            <person name="Hirokawa N."/>
            <person name="Hill D."/>
            <person name="Huminiecki L."/>
            <person name="Iacono M."/>
            <person name="Ikeo K."/>
            <person name="Iwama A."/>
            <person name="Ishikawa T."/>
            <person name="Jakt M."/>
            <person name="Kanapin A."/>
            <person name="Katoh M."/>
            <person name="Kawasawa Y."/>
            <person name="Kelso J."/>
            <person name="Kitamura H."/>
            <person name="Kitano H."/>
            <person name="Kollias G."/>
            <person name="Krishnan S.P."/>
            <person name="Kruger A."/>
            <person name="Kummerfeld S.K."/>
            <person name="Kurochkin I.V."/>
            <person name="Lareau L.F."/>
            <person name="Lazarevic D."/>
            <person name="Lipovich L."/>
            <person name="Liu J."/>
            <person name="Liuni S."/>
            <person name="McWilliam S."/>
            <person name="Madan Babu M."/>
            <person name="Madera M."/>
            <person name="Marchionni L."/>
            <person name="Matsuda H."/>
            <person name="Matsuzawa S."/>
            <person name="Miki H."/>
            <person name="Mignone F."/>
            <person name="Miyake S."/>
            <person name="Morris K."/>
            <person name="Mottagui-Tabar S."/>
            <person name="Mulder N."/>
            <person name="Nakano N."/>
            <person name="Nakauchi H."/>
            <person name="Ng P."/>
            <person name="Nilsson R."/>
            <person name="Nishiguchi S."/>
            <person name="Nishikawa S."/>
            <person name="Nori F."/>
            <person name="Ohara O."/>
            <person name="Okazaki Y."/>
            <person name="Orlando V."/>
            <person name="Pang K.C."/>
            <person name="Pavan W.J."/>
            <person name="Pavesi G."/>
            <person name="Pesole G."/>
            <person name="Petrovsky N."/>
            <person name="Piazza S."/>
            <person name="Reed J."/>
            <person name="Reid J.F."/>
            <person name="Ring B.Z."/>
            <person name="Ringwald M."/>
            <person name="Rost B."/>
            <person name="Ruan Y."/>
            <person name="Salzberg S.L."/>
            <person name="Sandelin A."/>
            <person name="Schneider C."/>
            <person name="Schoenbach C."/>
            <person name="Sekiguchi K."/>
            <person name="Semple C.A."/>
            <person name="Seno S."/>
            <person name="Sessa L."/>
            <person name="Sheng Y."/>
            <person name="Shibata Y."/>
            <person name="Shimada H."/>
            <person name="Shimada K."/>
            <person name="Silva D."/>
            <person name="Sinclair B."/>
            <person name="Sperling S."/>
            <person name="Stupka E."/>
            <person name="Sugiura K."/>
            <person name="Sultana R."/>
            <person name="Takenaka Y."/>
            <person name="Taki K."/>
            <person name="Tammoja K."/>
            <person name="Tan S.L."/>
            <person name="Tang S."/>
            <person name="Taylor M.S."/>
            <person name="Tegner J."/>
            <person name="Teichmann S.A."/>
            <person name="Ueda H.R."/>
            <person name="van Nimwegen E."/>
            <person name="Verardo R."/>
            <person name="Wei C.L."/>
            <person name="Yagi K."/>
            <person name="Yamanishi H."/>
            <person name="Zabarovsky E."/>
            <person name="Zhu S."/>
            <person name="Zimmer A."/>
            <person name="Hide W."/>
            <person name="Bult C."/>
            <person name="Grimmond S.M."/>
            <person name="Teasdale R.D."/>
            <person name="Liu E.T."/>
            <person name="Brusic V."/>
            <person name="Quackenbush J."/>
            <person name="Wahlestedt C."/>
            <person name="Mattick J.S."/>
            <person name="Hume D.A."/>
            <person name="Kai C."/>
            <person name="Sasaki D."/>
            <person name="Tomaru Y."/>
            <person name="Fukuda S."/>
            <person name="Kanamori-Katayama M."/>
            <person name="Suzuki M."/>
            <person name="Aoki J."/>
            <person name="Arakawa T."/>
            <person name="Iida J."/>
            <person name="Imamura K."/>
            <person name="Itoh M."/>
            <person name="Kato T."/>
            <person name="Kawaji H."/>
            <person name="Kawagashira N."/>
            <person name="Kawashima T."/>
            <person name="Kojima M."/>
            <person name="Kondo S."/>
            <person name="Konno H."/>
            <person name="Nakano K."/>
            <person name="Ninomiya N."/>
            <person name="Nishio T."/>
            <person name="Okada M."/>
            <person name="Plessy C."/>
            <person name="Shibata K."/>
            <person name="Shiraki T."/>
            <person name="Suzuki S."/>
            <person name="Tagami M."/>
            <person name="Waki K."/>
            <person name="Watahiki A."/>
            <person name="Okamura-Oho Y."/>
            <person name="Suzuki H."/>
            <person name="Kawai J."/>
            <person name="Hayashizaki Y."/>
        </authorList>
    </citation>
    <scope>NUCLEOTIDE SEQUENCE [LARGE SCALE MRNA]</scope>
    <source>
        <strain>C57BL/6J</strain>
        <tissue>Cerebellum</tissue>
        <tissue>Diencephalon</tissue>
        <tissue>Hypothalamus</tissue>
        <tissue>Spinal cord</tissue>
    </source>
</reference>
<reference key="2">
    <citation type="journal article" date="2009" name="PLoS Biol.">
        <title>Lineage-specific biology revealed by a finished genome assembly of the mouse.</title>
        <authorList>
            <person name="Church D.M."/>
            <person name="Goodstadt L."/>
            <person name="Hillier L.W."/>
            <person name="Zody M.C."/>
            <person name="Goldstein S."/>
            <person name="She X."/>
            <person name="Bult C.J."/>
            <person name="Agarwala R."/>
            <person name="Cherry J.L."/>
            <person name="DiCuccio M."/>
            <person name="Hlavina W."/>
            <person name="Kapustin Y."/>
            <person name="Meric P."/>
            <person name="Maglott D."/>
            <person name="Birtle Z."/>
            <person name="Marques A.C."/>
            <person name="Graves T."/>
            <person name="Zhou S."/>
            <person name="Teague B."/>
            <person name="Potamousis K."/>
            <person name="Churas C."/>
            <person name="Place M."/>
            <person name="Herschleb J."/>
            <person name="Runnheim R."/>
            <person name="Forrest D."/>
            <person name="Amos-Landgraf J."/>
            <person name="Schwartz D.C."/>
            <person name="Cheng Z."/>
            <person name="Lindblad-Toh K."/>
            <person name="Eichler E.E."/>
            <person name="Ponting C.P."/>
        </authorList>
    </citation>
    <scope>NUCLEOTIDE SEQUENCE [LARGE SCALE GENOMIC DNA]</scope>
    <source>
        <strain>C57BL/6J</strain>
    </source>
</reference>
<reference key="3">
    <citation type="journal article" date="2004" name="Genome Res.">
        <title>The status, quality, and expansion of the NIH full-length cDNA project: the Mammalian Gene Collection (MGC).</title>
        <authorList>
            <consortium name="The MGC Project Team"/>
        </authorList>
    </citation>
    <scope>NUCLEOTIDE SEQUENCE [LARGE SCALE MRNA]</scope>
    <source>
        <strain>C57BL/6J</strain>
        <tissue>Embryo</tissue>
    </source>
</reference>
<keyword id="KW-1185">Reference proteome</keyword>
<keyword id="KW-0677">Repeat</keyword>
<keyword id="KW-0853">WD repeat</keyword>
<dbReference type="EMBL" id="AK034343">
    <property type="protein sequence ID" value="BAC28681.1"/>
    <property type="status" value="ALT_FRAME"/>
    <property type="molecule type" value="mRNA"/>
</dbReference>
<dbReference type="EMBL" id="AK034472">
    <property type="protein sequence ID" value="BAC28720.1"/>
    <property type="molecule type" value="mRNA"/>
</dbReference>
<dbReference type="EMBL" id="AK038557">
    <property type="protein sequence ID" value="BAC30041.1"/>
    <property type="molecule type" value="mRNA"/>
</dbReference>
<dbReference type="EMBL" id="AK039767">
    <property type="protein sequence ID" value="BAC30445.1"/>
    <property type="molecule type" value="mRNA"/>
</dbReference>
<dbReference type="EMBL" id="AK047360">
    <property type="protein sequence ID" value="BAC33034.1"/>
    <property type="molecule type" value="mRNA"/>
</dbReference>
<dbReference type="EMBL" id="AL670238">
    <property type="status" value="NOT_ANNOTATED_CDS"/>
    <property type="molecule type" value="Genomic_DNA"/>
</dbReference>
<dbReference type="EMBL" id="BC068319">
    <property type="protein sequence ID" value="AAH68319.1"/>
    <property type="molecule type" value="mRNA"/>
</dbReference>
<dbReference type="CCDS" id="CCDS30101.1"/>
<dbReference type="RefSeq" id="NP_001177647.1">
    <property type="nucleotide sequence ID" value="NM_001190718.1"/>
</dbReference>
<dbReference type="RefSeq" id="NP_848854.3">
    <property type="nucleotide sequence ID" value="NM_178739.6"/>
</dbReference>
<dbReference type="SMR" id="Q8CBW4"/>
<dbReference type="BioGRID" id="232763">
    <property type="interactions" value="1"/>
</dbReference>
<dbReference type="FunCoup" id="Q8CBW4">
    <property type="interactions" value="174"/>
</dbReference>
<dbReference type="IntAct" id="Q8CBW4">
    <property type="interactions" value="1"/>
</dbReference>
<dbReference type="STRING" id="10090.ENSMUSP00000062991"/>
<dbReference type="iPTMnet" id="Q8CBW4"/>
<dbReference type="PhosphoSitePlus" id="Q8CBW4"/>
<dbReference type="PaxDb" id="10090-ENSMUSP00000062991"/>
<dbReference type="ProteomicsDB" id="279169"/>
<dbReference type="DNASU" id="245404"/>
<dbReference type="Ensembl" id="ENSMUST00000060481.9">
    <property type="protein sequence ID" value="ENSMUSP00000062991.3"/>
    <property type="gene ID" value="ENSMUSG00000045284.10"/>
</dbReference>
<dbReference type="Ensembl" id="ENSMUST00000115056.2">
    <property type="protein sequence ID" value="ENSMUSP00000110708.2"/>
    <property type="gene ID" value="ENSMUSG00000045284.10"/>
</dbReference>
<dbReference type="GeneID" id="245404"/>
<dbReference type="KEGG" id="mmu:245404"/>
<dbReference type="UCSC" id="uc009tbg.2">
    <property type="organism name" value="mouse"/>
</dbReference>
<dbReference type="AGR" id="MGI:2444462"/>
<dbReference type="CTD" id="139170"/>
<dbReference type="MGI" id="MGI:2444462">
    <property type="gene designation" value="Dcaf12l1"/>
</dbReference>
<dbReference type="VEuPathDB" id="HostDB:ENSMUSG00000045284"/>
<dbReference type="eggNOG" id="ENOG502QR7U">
    <property type="taxonomic scope" value="Eukaryota"/>
</dbReference>
<dbReference type="GeneTree" id="ENSGT00940000161322"/>
<dbReference type="HOGENOM" id="CLU_020124_1_0_1"/>
<dbReference type="InParanoid" id="Q8CBW4"/>
<dbReference type="OMA" id="VQSGHIA"/>
<dbReference type="OrthoDB" id="9610195at2759"/>
<dbReference type="PhylomeDB" id="Q8CBW4"/>
<dbReference type="TreeFam" id="TF323731"/>
<dbReference type="BioGRID-ORCS" id="245404">
    <property type="hits" value="2 hits in 76 CRISPR screens"/>
</dbReference>
<dbReference type="PRO" id="PR:Q8CBW4"/>
<dbReference type="Proteomes" id="UP000000589">
    <property type="component" value="Chromosome X"/>
</dbReference>
<dbReference type="RNAct" id="Q8CBW4">
    <property type="molecule type" value="protein"/>
</dbReference>
<dbReference type="Bgee" id="ENSMUSG00000045284">
    <property type="expression patterns" value="Expressed in choroid plexus epithelium and 196 other cell types or tissues"/>
</dbReference>
<dbReference type="FunFam" id="2.130.10.10:FF:000497">
    <property type="entry name" value="DDB1 and CUL4-associated factor 12-like 1"/>
    <property type="match status" value="1"/>
</dbReference>
<dbReference type="FunFam" id="2.130.10.10:FF:000486">
    <property type="entry name" value="DDB1- and CUL4-associated factor 12-like protein 2"/>
    <property type="match status" value="1"/>
</dbReference>
<dbReference type="Gene3D" id="2.130.10.10">
    <property type="entry name" value="YVTN repeat-like/Quinoprotein amine dehydrogenase"/>
    <property type="match status" value="2"/>
</dbReference>
<dbReference type="InterPro" id="IPR056151">
    <property type="entry name" value="Beta-prop_DCAF12"/>
</dbReference>
<dbReference type="InterPro" id="IPR051191">
    <property type="entry name" value="DCAF12"/>
</dbReference>
<dbReference type="InterPro" id="IPR015943">
    <property type="entry name" value="WD40/YVTN_repeat-like_dom_sf"/>
</dbReference>
<dbReference type="InterPro" id="IPR036322">
    <property type="entry name" value="WD40_repeat_dom_sf"/>
</dbReference>
<dbReference type="InterPro" id="IPR001680">
    <property type="entry name" value="WD40_rpt"/>
</dbReference>
<dbReference type="PANTHER" id="PTHR19860:SF8">
    <property type="entry name" value="DDB1- AND CUL4-ASSOCIATED FACTOR 12-LIKE PROTEIN 2"/>
    <property type="match status" value="1"/>
</dbReference>
<dbReference type="PANTHER" id="PTHR19860">
    <property type="entry name" value="DDB1- AND CUL4-ASSOCIATED FACTOR 12-RELATED"/>
    <property type="match status" value="1"/>
</dbReference>
<dbReference type="Pfam" id="PF23760">
    <property type="entry name" value="Beta-prop_DCAF12"/>
    <property type="match status" value="1"/>
</dbReference>
<dbReference type="SMART" id="SM00320">
    <property type="entry name" value="WD40"/>
    <property type="match status" value="3"/>
</dbReference>
<dbReference type="SUPFAM" id="SSF50978">
    <property type="entry name" value="WD40 repeat-like"/>
    <property type="match status" value="1"/>
</dbReference>
<dbReference type="PROSITE" id="PS50082">
    <property type="entry name" value="WD_REPEATS_2"/>
    <property type="match status" value="1"/>
</dbReference>
<dbReference type="PROSITE" id="PS50294">
    <property type="entry name" value="WD_REPEATS_REGION"/>
    <property type="match status" value="1"/>
</dbReference>